<organism>
    <name type="scientific">Yersinia pestis (strain Pestoides F)</name>
    <dbReference type="NCBI Taxonomy" id="386656"/>
    <lineage>
        <taxon>Bacteria</taxon>
        <taxon>Pseudomonadati</taxon>
        <taxon>Pseudomonadota</taxon>
        <taxon>Gammaproteobacteria</taxon>
        <taxon>Enterobacterales</taxon>
        <taxon>Yersiniaceae</taxon>
        <taxon>Yersinia</taxon>
    </lineage>
</organism>
<proteinExistence type="inferred from homology"/>
<keyword id="KW-0997">Cell inner membrane</keyword>
<keyword id="KW-1003">Cell membrane</keyword>
<keyword id="KW-0444">Lipid biosynthesis</keyword>
<keyword id="KW-0443">Lipid metabolism</keyword>
<keyword id="KW-0472">Membrane</keyword>
<keyword id="KW-0594">Phospholipid biosynthesis</keyword>
<keyword id="KW-1208">Phospholipid metabolism</keyword>
<keyword id="KW-0808">Transferase</keyword>
<keyword id="KW-0812">Transmembrane</keyword>
<keyword id="KW-1133">Transmembrane helix</keyword>
<protein>
    <recommendedName>
        <fullName evidence="1">CDP-diacylglycerol--glycerol-3-phosphate 3-phosphatidyltransferase</fullName>
        <ecNumber evidence="1">2.7.8.5</ecNumber>
    </recommendedName>
    <alternativeName>
        <fullName evidence="1">Phosphatidylglycerophosphate synthase</fullName>
        <shortName evidence="1">PGP synthase</shortName>
    </alternativeName>
</protein>
<feature type="chain" id="PRO_0000301868" description="CDP-diacylglycerol--glycerol-3-phosphate 3-phosphatidyltransferase">
    <location>
        <begin position="1"/>
        <end position="182"/>
    </location>
</feature>
<feature type="topological domain" description="Cytoplasmic" evidence="1">
    <location>
        <begin position="1"/>
        <end position="12"/>
    </location>
</feature>
<feature type="transmembrane region" description="Helical" evidence="1">
    <location>
        <begin position="13"/>
        <end position="37"/>
    </location>
</feature>
<feature type="topological domain" description="Periplasmic" evidence="1">
    <location>
        <begin position="38"/>
        <end position="60"/>
    </location>
</feature>
<feature type="transmembrane region" description="Helical" evidence="1">
    <location>
        <begin position="61"/>
        <end position="81"/>
    </location>
</feature>
<feature type="topological domain" description="Cytoplasmic" evidence="1">
    <location>
        <begin position="82"/>
        <end position="86"/>
    </location>
</feature>
<feature type="transmembrane region" description="Helical" evidence="1">
    <location>
        <begin position="87"/>
        <end position="107"/>
    </location>
</feature>
<feature type="topological domain" description="Periplasmic" evidence="1">
    <location>
        <begin position="108"/>
        <end position="145"/>
    </location>
</feature>
<feature type="transmembrane region" description="Helical" evidence="1">
    <location>
        <begin position="146"/>
        <end position="168"/>
    </location>
</feature>
<feature type="topological domain" description="Cytoplasmic" evidence="1">
    <location>
        <begin position="169"/>
        <end position="181"/>
    </location>
</feature>
<gene>
    <name evidence="1" type="primary">pgsA</name>
    <name type="ordered locus">YPDSF_1259</name>
</gene>
<evidence type="ECO:0000255" key="1">
    <source>
        <dbReference type="HAMAP-Rule" id="MF_01437"/>
    </source>
</evidence>
<dbReference type="EC" id="2.7.8.5" evidence="1"/>
<dbReference type="EMBL" id="CP000668">
    <property type="protein sequence ID" value="ABP39652.1"/>
    <property type="molecule type" value="Genomic_DNA"/>
</dbReference>
<dbReference type="RefSeq" id="WP_002220475.1">
    <property type="nucleotide sequence ID" value="NZ_CP009715.1"/>
</dbReference>
<dbReference type="SMR" id="A4TK40"/>
<dbReference type="GeneID" id="96665312"/>
<dbReference type="KEGG" id="ypp:YPDSF_1259"/>
<dbReference type="PATRIC" id="fig|386656.14.peg.2548"/>
<dbReference type="UniPathway" id="UPA00084">
    <property type="reaction ID" value="UER00503"/>
</dbReference>
<dbReference type="GO" id="GO:0005886">
    <property type="term" value="C:plasma membrane"/>
    <property type="evidence" value="ECO:0007669"/>
    <property type="project" value="UniProtKB-SubCell"/>
</dbReference>
<dbReference type="GO" id="GO:0008444">
    <property type="term" value="F:CDP-diacylglycerol-glycerol-3-phosphate 3-phosphatidyltransferase activity"/>
    <property type="evidence" value="ECO:0007669"/>
    <property type="project" value="UniProtKB-UniRule"/>
</dbReference>
<dbReference type="GO" id="GO:0006655">
    <property type="term" value="P:phosphatidylglycerol biosynthetic process"/>
    <property type="evidence" value="ECO:0007669"/>
    <property type="project" value="UniProtKB-UniRule"/>
</dbReference>
<dbReference type="FunFam" id="1.20.120.1760:FF:000001">
    <property type="entry name" value="CDP-diacylglycerol--glycerol-3-phosphate 3-phosphatidyltransferase"/>
    <property type="match status" value="1"/>
</dbReference>
<dbReference type="Gene3D" id="1.20.120.1760">
    <property type="match status" value="1"/>
</dbReference>
<dbReference type="HAMAP" id="MF_01437">
    <property type="entry name" value="PgsA"/>
    <property type="match status" value="1"/>
</dbReference>
<dbReference type="InterPro" id="IPR050324">
    <property type="entry name" value="CDP-alcohol_PTase-I"/>
</dbReference>
<dbReference type="InterPro" id="IPR000462">
    <property type="entry name" value="CDP-OH_P_trans"/>
</dbReference>
<dbReference type="InterPro" id="IPR043130">
    <property type="entry name" value="CDP-OH_PTrfase_TM_dom"/>
</dbReference>
<dbReference type="InterPro" id="IPR048254">
    <property type="entry name" value="CDP_ALCOHOL_P_TRANSF_CS"/>
</dbReference>
<dbReference type="InterPro" id="IPR023762">
    <property type="entry name" value="PGP_synthase_bac"/>
</dbReference>
<dbReference type="InterPro" id="IPR004570">
    <property type="entry name" value="Phosphatidylglycerol_P_synth"/>
</dbReference>
<dbReference type="NCBIfam" id="TIGR00560">
    <property type="entry name" value="pgsA"/>
    <property type="match status" value="1"/>
</dbReference>
<dbReference type="NCBIfam" id="NF008090">
    <property type="entry name" value="PRK10832.1"/>
    <property type="match status" value="1"/>
</dbReference>
<dbReference type="PANTHER" id="PTHR14269:SF62">
    <property type="entry name" value="CDP-DIACYLGLYCEROL--GLYCEROL-3-PHOSPHATE 3-PHOSPHATIDYLTRANSFERASE 1, CHLOROPLASTIC"/>
    <property type="match status" value="1"/>
</dbReference>
<dbReference type="PANTHER" id="PTHR14269">
    <property type="entry name" value="CDP-DIACYLGLYCEROL--GLYCEROL-3-PHOSPHATE 3-PHOSPHATIDYLTRANSFERASE-RELATED"/>
    <property type="match status" value="1"/>
</dbReference>
<dbReference type="Pfam" id="PF01066">
    <property type="entry name" value="CDP-OH_P_transf"/>
    <property type="match status" value="1"/>
</dbReference>
<dbReference type="PIRSF" id="PIRSF000847">
    <property type="entry name" value="Phos_ph_gly_syn"/>
    <property type="match status" value="1"/>
</dbReference>
<dbReference type="PROSITE" id="PS00379">
    <property type="entry name" value="CDP_ALCOHOL_P_TRANSF"/>
    <property type="match status" value="1"/>
</dbReference>
<reference key="1">
    <citation type="submission" date="2007-02" db="EMBL/GenBank/DDBJ databases">
        <title>Complete sequence of chromosome of Yersinia pestis Pestoides F.</title>
        <authorList>
            <consortium name="US DOE Joint Genome Institute"/>
            <person name="Copeland A."/>
            <person name="Lucas S."/>
            <person name="Lapidus A."/>
            <person name="Barry K."/>
            <person name="Detter J.C."/>
            <person name="Glavina del Rio T."/>
            <person name="Hammon N."/>
            <person name="Israni S."/>
            <person name="Dalin E."/>
            <person name="Tice H."/>
            <person name="Pitluck S."/>
            <person name="Di Bartolo G."/>
            <person name="Chain P."/>
            <person name="Malfatti S."/>
            <person name="Shin M."/>
            <person name="Vergez L."/>
            <person name="Schmutz J."/>
            <person name="Larimer F."/>
            <person name="Land M."/>
            <person name="Hauser L."/>
            <person name="Worsham P."/>
            <person name="Chu M."/>
            <person name="Bearden S."/>
            <person name="Garcia E."/>
            <person name="Richardson P."/>
        </authorList>
    </citation>
    <scope>NUCLEOTIDE SEQUENCE [LARGE SCALE GENOMIC DNA]</scope>
    <source>
        <strain>Pestoides F</strain>
    </source>
</reference>
<accession>A4TK40</accession>
<comment type="function">
    <text evidence="1">Catalyzes the conversion of cytidine diphosphate diacylglycerol (CDP-DG) and glycerol 3-phosphate into phosphatidylglycerol. Essential for the synthesis of anionic phospholipids, thereby playing a role in balancing the ratio of zwitterionic and anionic phospholipids, which is thought to be important for normal membrane function.</text>
</comment>
<comment type="catalytic activity">
    <reaction evidence="1">
        <text>a CDP-1,2-diacyl-sn-glycerol + sn-glycerol 3-phosphate = a 1,2-diacyl-sn-glycero-3-phospho-(1'-sn-glycero-3'-phosphate) + CMP + H(+)</text>
        <dbReference type="Rhea" id="RHEA:12593"/>
        <dbReference type="ChEBI" id="CHEBI:15378"/>
        <dbReference type="ChEBI" id="CHEBI:57597"/>
        <dbReference type="ChEBI" id="CHEBI:58332"/>
        <dbReference type="ChEBI" id="CHEBI:60110"/>
        <dbReference type="ChEBI" id="CHEBI:60377"/>
        <dbReference type="EC" id="2.7.8.5"/>
    </reaction>
</comment>
<comment type="pathway">
    <text evidence="1">Phospholipid metabolism; phosphatidylglycerol biosynthesis; phosphatidylglycerol from CDP-diacylglycerol: step 1/2.</text>
</comment>
<comment type="subcellular location">
    <subcellularLocation>
        <location evidence="1">Cell inner membrane</location>
        <topology evidence="1">Multi-pass membrane protein</topology>
    </subcellularLocation>
</comment>
<comment type="similarity">
    <text evidence="1">Belongs to the CDP-alcohol phosphatidyltransferase class-I family.</text>
</comment>
<sequence>MQLNIPTWLTLFRVVLIPFFVLAFYLPFVWAPMVCAIIFVFAAATDWFDGFLARRWKQTTRFGAFLDPVADKVMVAVALVLVAEHYHSWWITLPAATMIAREIIISSLREWMAEIGKRSSVAVSWVGKVKTMAQMGSLVGLLWRPDHNVELASFVLLYIAAVLTFWSMFQYLNAAWSDLLEP</sequence>
<name>PGSA_YERPP</name>